<gene>
    <name evidence="1" type="primary">trmD</name>
    <name type="ordered locus">MAP_2974c</name>
</gene>
<accession>Q73VN9</accession>
<organism>
    <name type="scientific">Mycolicibacterium paratuberculosis (strain ATCC BAA-968 / K-10)</name>
    <name type="common">Mycobacterium paratuberculosis</name>
    <dbReference type="NCBI Taxonomy" id="262316"/>
    <lineage>
        <taxon>Bacteria</taxon>
        <taxon>Bacillati</taxon>
        <taxon>Actinomycetota</taxon>
        <taxon>Actinomycetes</taxon>
        <taxon>Mycobacteriales</taxon>
        <taxon>Mycobacteriaceae</taxon>
        <taxon>Mycobacterium</taxon>
        <taxon>Mycobacterium avium complex (MAC)</taxon>
    </lineage>
</organism>
<reference key="1">
    <citation type="journal article" date="2005" name="Proc. Natl. Acad. Sci. U.S.A.">
        <title>The complete genome sequence of Mycobacterium avium subspecies paratuberculosis.</title>
        <authorList>
            <person name="Li L."/>
            <person name="Bannantine J.P."/>
            <person name="Zhang Q."/>
            <person name="Amonsin A."/>
            <person name="May B.J."/>
            <person name="Alt D."/>
            <person name="Banerji N."/>
            <person name="Kanjilal S."/>
            <person name="Kapur V."/>
        </authorList>
    </citation>
    <scope>NUCLEOTIDE SEQUENCE [LARGE SCALE GENOMIC DNA]</scope>
    <source>
        <strain>ATCC BAA-968 / K-10</strain>
    </source>
</reference>
<protein>
    <recommendedName>
        <fullName evidence="1">tRNA (guanine-N(1)-)-methyltransferase</fullName>
        <ecNumber evidence="1">2.1.1.228</ecNumber>
    </recommendedName>
    <alternativeName>
        <fullName evidence="1">M1G-methyltransferase</fullName>
    </alternativeName>
    <alternativeName>
        <fullName evidence="1">tRNA [GM37] methyltransferase</fullName>
    </alternativeName>
</protein>
<proteinExistence type="evidence at protein level"/>
<evidence type="ECO:0000255" key="1">
    <source>
        <dbReference type="HAMAP-Rule" id="MF_00605"/>
    </source>
</evidence>
<evidence type="ECO:0000256" key="2">
    <source>
        <dbReference type="SAM" id="MobiDB-lite"/>
    </source>
</evidence>
<dbReference type="EC" id="2.1.1.228" evidence="1"/>
<dbReference type="EMBL" id="AE016958">
    <property type="protein sequence ID" value="AAS05291.1"/>
    <property type="molecule type" value="Genomic_DNA"/>
</dbReference>
<dbReference type="RefSeq" id="WP_003875072.1">
    <property type="nucleotide sequence ID" value="NZ_CP106873.1"/>
</dbReference>
<dbReference type="PDB" id="8FCH">
    <property type="method" value="X-ray"/>
    <property type="resolution" value="1.96 A"/>
    <property type="chains" value="A/B=1-239"/>
</dbReference>
<dbReference type="PDB" id="8FCI">
    <property type="method" value="X-ray"/>
    <property type="resolution" value="1.75 A"/>
    <property type="chains" value="A/B=1-239"/>
</dbReference>
<dbReference type="PDBsum" id="8FCH"/>
<dbReference type="PDBsum" id="8FCI"/>
<dbReference type="SMR" id="Q73VN9"/>
<dbReference type="STRING" id="262316.MAP_2974c"/>
<dbReference type="KEGG" id="mpa:MAP_2974c"/>
<dbReference type="eggNOG" id="COG0336">
    <property type="taxonomic scope" value="Bacteria"/>
</dbReference>
<dbReference type="HOGENOM" id="CLU_047363_0_0_11"/>
<dbReference type="Proteomes" id="UP000000580">
    <property type="component" value="Chromosome"/>
</dbReference>
<dbReference type="GO" id="GO:0005829">
    <property type="term" value="C:cytosol"/>
    <property type="evidence" value="ECO:0007669"/>
    <property type="project" value="TreeGrafter"/>
</dbReference>
<dbReference type="GO" id="GO:0052906">
    <property type="term" value="F:tRNA (guanine(37)-N1)-methyltransferase activity"/>
    <property type="evidence" value="ECO:0007669"/>
    <property type="project" value="UniProtKB-UniRule"/>
</dbReference>
<dbReference type="GO" id="GO:0002939">
    <property type="term" value="P:tRNA N1-guanine methylation"/>
    <property type="evidence" value="ECO:0007669"/>
    <property type="project" value="TreeGrafter"/>
</dbReference>
<dbReference type="CDD" id="cd18080">
    <property type="entry name" value="TrmD-like"/>
    <property type="match status" value="1"/>
</dbReference>
<dbReference type="FunFam" id="1.10.1270.20:FF:000004">
    <property type="entry name" value="tRNA (guanine-N(1)-)-methyltransferase"/>
    <property type="match status" value="1"/>
</dbReference>
<dbReference type="FunFam" id="3.40.1280.10:FF:000001">
    <property type="entry name" value="tRNA (guanine-N(1)-)-methyltransferase"/>
    <property type="match status" value="1"/>
</dbReference>
<dbReference type="Gene3D" id="3.40.1280.10">
    <property type="match status" value="1"/>
</dbReference>
<dbReference type="Gene3D" id="1.10.1270.20">
    <property type="entry name" value="tRNA(m1g37)methyltransferase, domain 2"/>
    <property type="match status" value="1"/>
</dbReference>
<dbReference type="HAMAP" id="MF_00605">
    <property type="entry name" value="TrmD"/>
    <property type="match status" value="1"/>
</dbReference>
<dbReference type="InterPro" id="IPR029028">
    <property type="entry name" value="Alpha/beta_knot_MTases"/>
</dbReference>
<dbReference type="InterPro" id="IPR023148">
    <property type="entry name" value="tRNA_m1G_MeTrfase_C_sf"/>
</dbReference>
<dbReference type="InterPro" id="IPR002649">
    <property type="entry name" value="tRNA_m1G_MeTrfase_TrmD"/>
</dbReference>
<dbReference type="InterPro" id="IPR029026">
    <property type="entry name" value="tRNA_m1G_MTases_N"/>
</dbReference>
<dbReference type="InterPro" id="IPR016009">
    <property type="entry name" value="tRNA_MeTrfase_TRMD/TRM10"/>
</dbReference>
<dbReference type="NCBIfam" id="NF000648">
    <property type="entry name" value="PRK00026.1"/>
    <property type="match status" value="1"/>
</dbReference>
<dbReference type="NCBIfam" id="TIGR00088">
    <property type="entry name" value="trmD"/>
    <property type="match status" value="1"/>
</dbReference>
<dbReference type="PANTHER" id="PTHR46417">
    <property type="entry name" value="TRNA (GUANINE-N(1)-)-METHYLTRANSFERASE"/>
    <property type="match status" value="1"/>
</dbReference>
<dbReference type="PANTHER" id="PTHR46417:SF1">
    <property type="entry name" value="TRNA (GUANINE-N(1)-)-METHYLTRANSFERASE"/>
    <property type="match status" value="1"/>
</dbReference>
<dbReference type="Pfam" id="PF01746">
    <property type="entry name" value="tRNA_m1G_MT"/>
    <property type="match status" value="1"/>
</dbReference>
<dbReference type="PIRSF" id="PIRSF000386">
    <property type="entry name" value="tRNA_mtase"/>
    <property type="match status" value="1"/>
</dbReference>
<dbReference type="SUPFAM" id="SSF75217">
    <property type="entry name" value="alpha/beta knot"/>
    <property type="match status" value="1"/>
</dbReference>
<comment type="function">
    <text evidence="1">Specifically methylates guanosine-37 in various tRNAs.</text>
</comment>
<comment type="catalytic activity">
    <reaction evidence="1">
        <text>guanosine(37) in tRNA + S-adenosyl-L-methionine = N(1)-methylguanosine(37) in tRNA + S-adenosyl-L-homocysteine + H(+)</text>
        <dbReference type="Rhea" id="RHEA:36899"/>
        <dbReference type="Rhea" id="RHEA-COMP:10145"/>
        <dbReference type="Rhea" id="RHEA-COMP:10147"/>
        <dbReference type="ChEBI" id="CHEBI:15378"/>
        <dbReference type="ChEBI" id="CHEBI:57856"/>
        <dbReference type="ChEBI" id="CHEBI:59789"/>
        <dbReference type="ChEBI" id="CHEBI:73542"/>
        <dbReference type="ChEBI" id="CHEBI:74269"/>
        <dbReference type="EC" id="2.1.1.228"/>
    </reaction>
</comment>
<comment type="subunit">
    <text evidence="1">Homodimer.</text>
</comment>
<comment type="subcellular location">
    <subcellularLocation>
        <location evidence="1">Cytoplasm</location>
    </subcellularLocation>
</comment>
<comment type="similarity">
    <text evidence="1">Belongs to the RNA methyltransferase TrmD family.</text>
</comment>
<feature type="chain" id="PRO_0000060409" description="tRNA (guanine-N(1)-)-methyltransferase">
    <location>
        <begin position="1"/>
        <end position="239"/>
    </location>
</feature>
<feature type="region of interest" description="Disordered" evidence="2">
    <location>
        <begin position="163"/>
        <end position="187"/>
    </location>
</feature>
<feature type="region of interest" description="Disordered" evidence="2">
    <location>
        <begin position="217"/>
        <end position="239"/>
    </location>
</feature>
<feature type="compositionally biased region" description="Basic and acidic residues" evidence="2">
    <location>
        <begin position="165"/>
        <end position="180"/>
    </location>
</feature>
<feature type="compositionally biased region" description="Basic and acidic residues" evidence="2">
    <location>
        <begin position="217"/>
        <end position="226"/>
    </location>
</feature>
<feature type="binding site" evidence="1">
    <location>
        <position position="109"/>
    </location>
    <ligand>
        <name>S-adenosyl-L-methionine</name>
        <dbReference type="ChEBI" id="CHEBI:59789"/>
    </ligand>
</feature>
<feature type="binding site" evidence="1">
    <location>
        <begin position="133"/>
        <end position="138"/>
    </location>
    <ligand>
        <name>S-adenosyl-L-methionine</name>
        <dbReference type="ChEBI" id="CHEBI:59789"/>
    </ligand>
</feature>
<sequence length="239" mass="26326">MRIDVVTIFPAYLDPLRQSLPGKAIQSGLVDLRVHDLRRWTHDAHRSVDDAPYGGGPGMVMKAPVWGEALDEIASAETLLVVPTPAGVLFDQATAARWSAERHLVFACGRYEGIDQRVVEDAARRMRVEEVSIGDYVLPGGESAAVVMIEAVLRLLDGVLGNPASRHDDSHSPALDRRLEGPSYTRPPSWRGLDVPEVLLSGDHARIAAWRREVSLQRTRERRPELLADPVGPQDDPGR</sequence>
<keyword id="KW-0002">3D-structure</keyword>
<keyword id="KW-0963">Cytoplasm</keyword>
<keyword id="KW-0489">Methyltransferase</keyword>
<keyword id="KW-1185">Reference proteome</keyword>
<keyword id="KW-0949">S-adenosyl-L-methionine</keyword>
<keyword id="KW-0808">Transferase</keyword>
<keyword id="KW-0819">tRNA processing</keyword>
<name>TRMD_MYCPA</name>